<proteinExistence type="inferred from homology"/>
<keyword id="KW-1005">Bacterial flagellum biogenesis</keyword>
<keyword id="KW-0143">Chaperone</keyword>
<keyword id="KW-0963">Cytoplasm</keyword>
<keyword id="KW-1185">Reference proteome</keyword>
<keyword id="KW-0810">Translation regulation</keyword>
<name>FLIW_THEMA</name>
<sequence>MVYKTKLGEIEISDESIFTFEKGIPGFEHLRKFALVFPQETFPIGWLLSLEDSEVGLPVVDPKLVRADYDPAVPSEDLEEIEAENQEALLFFCVLTIPPGKPEKTTINLRAPIILNQKKKKGIQTILENEDYQLRHLLSEEIERSKTVV</sequence>
<gene>
    <name evidence="1" type="primary">fliW</name>
    <name type="ordered locus">TM_0081</name>
</gene>
<evidence type="ECO:0000255" key="1">
    <source>
        <dbReference type="HAMAP-Rule" id="MF_01185"/>
    </source>
</evidence>
<comment type="function">
    <text evidence="1">Acts as an anti-CsrA protein, binds CsrA and prevents it from repressing translation of its target genes, one of which is flagellin. Binds to flagellin and participates in the assembly of the flagellum.</text>
</comment>
<comment type="subunit">
    <text evidence="1">Interacts with translational regulator CsrA and flagellin(s).</text>
</comment>
<comment type="subcellular location">
    <subcellularLocation>
        <location evidence="1">Cytoplasm</location>
    </subcellularLocation>
</comment>
<comment type="similarity">
    <text evidence="1">Belongs to the FliW family.</text>
</comment>
<dbReference type="EMBL" id="AE000512">
    <property type="protein sequence ID" value="AAD35175.1"/>
    <property type="molecule type" value="Genomic_DNA"/>
</dbReference>
<dbReference type="PIR" id="C72419">
    <property type="entry name" value="C72419"/>
</dbReference>
<dbReference type="RefSeq" id="NP_227897.1">
    <property type="nucleotide sequence ID" value="NC_000853.1"/>
</dbReference>
<dbReference type="RefSeq" id="WP_004082606.1">
    <property type="nucleotide sequence ID" value="NZ_CP011107.1"/>
</dbReference>
<dbReference type="SMR" id="Q9WXT6"/>
<dbReference type="FunCoup" id="Q9WXT6">
    <property type="interactions" value="25"/>
</dbReference>
<dbReference type="STRING" id="243274.TM_0081"/>
<dbReference type="PaxDb" id="243274-THEMA_04400"/>
<dbReference type="EnsemblBacteria" id="AAD35175">
    <property type="protein sequence ID" value="AAD35175"/>
    <property type="gene ID" value="TM_0081"/>
</dbReference>
<dbReference type="KEGG" id="tma:TM0081"/>
<dbReference type="KEGG" id="tmi:THEMA_04400"/>
<dbReference type="KEGG" id="tmm:Tmari_0078"/>
<dbReference type="KEGG" id="tmw:THMA_0077"/>
<dbReference type="eggNOG" id="COG1699">
    <property type="taxonomic scope" value="Bacteria"/>
</dbReference>
<dbReference type="InParanoid" id="Q9WXT6"/>
<dbReference type="OrthoDB" id="9801235at2"/>
<dbReference type="Proteomes" id="UP000008183">
    <property type="component" value="Chromosome"/>
</dbReference>
<dbReference type="GO" id="GO:0005737">
    <property type="term" value="C:cytoplasm"/>
    <property type="evidence" value="ECO:0007669"/>
    <property type="project" value="UniProtKB-SubCell"/>
</dbReference>
<dbReference type="GO" id="GO:0044780">
    <property type="term" value="P:bacterial-type flagellum assembly"/>
    <property type="evidence" value="ECO:0007669"/>
    <property type="project" value="UniProtKB-UniRule"/>
</dbReference>
<dbReference type="GO" id="GO:0006417">
    <property type="term" value="P:regulation of translation"/>
    <property type="evidence" value="ECO:0007669"/>
    <property type="project" value="UniProtKB-KW"/>
</dbReference>
<dbReference type="Gene3D" id="2.30.290.10">
    <property type="entry name" value="BH3618-like"/>
    <property type="match status" value="1"/>
</dbReference>
<dbReference type="HAMAP" id="MF_01185">
    <property type="entry name" value="FliW"/>
    <property type="match status" value="1"/>
</dbReference>
<dbReference type="InterPro" id="IPR003775">
    <property type="entry name" value="Flagellar_assembly_factor_FliW"/>
</dbReference>
<dbReference type="InterPro" id="IPR024046">
    <property type="entry name" value="Flagellar_assmbl_FliW_dom_sf"/>
</dbReference>
<dbReference type="NCBIfam" id="NF009793">
    <property type="entry name" value="PRK13285.1-1"/>
    <property type="match status" value="1"/>
</dbReference>
<dbReference type="PANTHER" id="PTHR39190">
    <property type="entry name" value="FLAGELLAR ASSEMBLY FACTOR FLIW"/>
    <property type="match status" value="1"/>
</dbReference>
<dbReference type="PANTHER" id="PTHR39190:SF1">
    <property type="entry name" value="FLAGELLAR ASSEMBLY FACTOR FLIW"/>
    <property type="match status" value="1"/>
</dbReference>
<dbReference type="Pfam" id="PF02623">
    <property type="entry name" value="FliW"/>
    <property type="match status" value="1"/>
</dbReference>
<dbReference type="SUPFAM" id="SSF141457">
    <property type="entry name" value="BH3618-like"/>
    <property type="match status" value="1"/>
</dbReference>
<reference key="1">
    <citation type="journal article" date="1999" name="Nature">
        <title>Evidence for lateral gene transfer between Archaea and Bacteria from genome sequence of Thermotoga maritima.</title>
        <authorList>
            <person name="Nelson K.E."/>
            <person name="Clayton R.A."/>
            <person name="Gill S.R."/>
            <person name="Gwinn M.L."/>
            <person name="Dodson R.J."/>
            <person name="Haft D.H."/>
            <person name="Hickey E.K."/>
            <person name="Peterson J.D."/>
            <person name="Nelson W.C."/>
            <person name="Ketchum K.A."/>
            <person name="McDonald L.A."/>
            <person name="Utterback T.R."/>
            <person name="Malek J.A."/>
            <person name="Linher K.D."/>
            <person name="Garrett M.M."/>
            <person name="Stewart A.M."/>
            <person name="Cotton M.D."/>
            <person name="Pratt M.S."/>
            <person name="Phillips C.A."/>
            <person name="Richardson D.L."/>
            <person name="Heidelberg J.F."/>
            <person name="Sutton G.G."/>
            <person name="Fleischmann R.D."/>
            <person name="Eisen J.A."/>
            <person name="White O."/>
            <person name="Salzberg S.L."/>
            <person name="Smith H.O."/>
            <person name="Venter J.C."/>
            <person name="Fraser C.M."/>
        </authorList>
    </citation>
    <scope>NUCLEOTIDE SEQUENCE [LARGE SCALE GENOMIC DNA]</scope>
    <source>
        <strain>ATCC 43589 / DSM 3109 / JCM 10099 / NBRC 100826 / MSB8</strain>
    </source>
</reference>
<accession>Q9WXT6</accession>
<organism>
    <name type="scientific">Thermotoga maritima (strain ATCC 43589 / DSM 3109 / JCM 10099 / NBRC 100826 / MSB8)</name>
    <dbReference type="NCBI Taxonomy" id="243274"/>
    <lineage>
        <taxon>Bacteria</taxon>
        <taxon>Thermotogati</taxon>
        <taxon>Thermotogota</taxon>
        <taxon>Thermotogae</taxon>
        <taxon>Thermotogales</taxon>
        <taxon>Thermotogaceae</taxon>
        <taxon>Thermotoga</taxon>
    </lineage>
</organism>
<protein>
    <recommendedName>
        <fullName evidence="1">Flagellar assembly factor FliW</fullName>
    </recommendedName>
</protein>
<feature type="chain" id="PRO_0000273010" description="Flagellar assembly factor FliW">
    <location>
        <begin position="1"/>
        <end position="149"/>
    </location>
</feature>